<organism>
    <name type="scientific">Clostridium kluyveri (strain NBRC 12016)</name>
    <dbReference type="NCBI Taxonomy" id="583346"/>
    <lineage>
        <taxon>Bacteria</taxon>
        <taxon>Bacillati</taxon>
        <taxon>Bacillota</taxon>
        <taxon>Clostridia</taxon>
        <taxon>Eubacteriales</taxon>
        <taxon>Clostridiaceae</taxon>
        <taxon>Clostridium</taxon>
    </lineage>
</organism>
<dbReference type="EMBL" id="AP009049">
    <property type="protein sequence ID" value="BAH05223.1"/>
    <property type="molecule type" value="Genomic_DNA"/>
</dbReference>
<dbReference type="SMR" id="B9DY98"/>
<dbReference type="KEGG" id="ckr:CKR_0172"/>
<dbReference type="HOGENOM" id="CLU_062853_0_0_9"/>
<dbReference type="Proteomes" id="UP000007969">
    <property type="component" value="Chromosome"/>
</dbReference>
<dbReference type="GO" id="GO:0015934">
    <property type="term" value="C:large ribosomal subunit"/>
    <property type="evidence" value="ECO:0007669"/>
    <property type="project" value="InterPro"/>
</dbReference>
<dbReference type="GO" id="GO:0019843">
    <property type="term" value="F:rRNA binding"/>
    <property type="evidence" value="ECO:0007669"/>
    <property type="project" value="UniProtKB-UniRule"/>
</dbReference>
<dbReference type="GO" id="GO:0003735">
    <property type="term" value="F:structural constituent of ribosome"/>
    <property type="evidence" value="ECO:0007669"/>
    <property type="project" value="InterPro"/>
</dbReference>
<dbReference type="GO" id="GO:0000049">
    <property type="term" value="F:tRNA binding"/>
    <property type="evidence" value="ECO:0007669"/>
    <property type="project" value="UniProtKB-KW"/>
</dbReference>
<dbReference type="GO" id="GO:0006417">
    <property type="term" value="P:regulation of translation"/>
    <property type="evidence" value="ECO:0007669"/>
    <property type="project" value="UniProtKB-KW"/>
</dbReference>
<dbReference type="GO" id="GO:0006412">
    <property type="term" value="P:translation"/>
    <property type="evidence" value="ECO:0007669"/>
    <property type="project" value="UniProtKB-UniRule"/>
</dbReference>
<dbReference type="CDD" id="cd00403">
    <property type="entry name" value="Ribosomal_L1"/>
    <property type="match status" value="1"/>
</dbReference>
<dbReference type="FunFam" id="3.40.50.790:FF:000001">
    <property type="entry name" value="50S ribosomal protein L1"/>
    <property type="match status" value="1"/>
</dbReference>
<dbReference type="Gene3D" id="3.30.190.20">
    <property type="match status" value="1"/>
</dbReference>
<dbReference type="Gene3D" id="3.40.50.790">
    <property type="match status" value="1"/>
</dbReference>
<dbReference type="HAMAP" id="MF_01318_B">
    <property type="entry name" value="Ribosomal_uL1_B"/>
    <property type="match status" value="1"/>
</dbReference>
<dbReference type="InterPro" id="IPR005878">
    <property type="entry name" value="Ribosom_uL1_bac-type"/>
</dbReference>
<dbReference type="InterPro" id="IPR002143">
    <property type="entry name" value="Ribosomal_uL1"/>
</dbReference>
<dbReference type="InterPro" id="IPR023674">
    <property type="entry name" value="Ribosomal_uL1-like"/>
</dbReference>
<dbReference type="InterPro" id="IPR028364">
    <property type="entry name" value="Ribosomal_uL1/biogenesis"/>
</dbReference>
<dbReference type="InterPro" id="IPR016095">
    <property type="entry name" value="Ribosomal_uL1_3-a/b-sand"/>
</dbReference>
<dbReference type="InterPro" id="IPR023673">
    <property type="entry name" value="Ribosomal_uL1_CS"/>
</dbReference>
<dbReference type="NCBIfam" id="TIGR01169">
    <property type="entry name" value="rplA_bact"/>
    <property type="match status" value="1"/>
</dbReference>
<dbReference type="PANTHER" id="PTHR36427">
    <property type="entry name" value="54S RIBOSOMAL PROTEIN L1, MITOCHONDRIAL"/>
    <property type="match status" value="1"/>
</dbReference>
<dbReference type="PANTHER" id="PTHR36427:SF3">
    <property type="entry name" value="LARGE RIBOSOMAL SUBUNIT PROTEIN UL1M"/>
    <property type="match status" value="1"/>
</dbReference>
<dbReference type="Pfam" id="PF00687">
    <property type="entry name" value="Ribosomal_L1"/>
    <property type="match status" value="1"/>
</dbReference>
<dbReference type="PIRSF" id="PIRSF002155">
    <property type="entry name" value="Ribosomal_L1"/>
    <property type="match status" value="1"/>
</dbReference>
<dbReference type="SUPFAM" id="SSF56808">
    <property type="entry name" value="Ribosomal protein L1"/>
    <property type="match status" value="1"/>
</dbReference>
<dbReference type="PROSITE" id="PS01199">
    <property type="entry name" value="RIBOSOMAL_L1"/>
    <property type="match status" value="1"/>
</dbReference>
<keyword id="KW-0678">Repressor</keyword>
<keyword id="KW-0687">Ribonucleoprotein</keyword>
<keyword id="KW-0689">Ribosomal protein</keyword>
<keyword id="KW-0694">RNA-binding</keyword>
<keyword id="KW-0699">rRNA-binding</keyword>
<keyword id="KW-0810">Translation regulation</keyword>
<keyword id="KW-0820">tRNA-binding</keyword>
<name>RL1_CLOK1</name>
<proteinExistence type="inferred from homology"/>
<gene>
    <name evidence="1" type="primary">rplA</name>
    <name type="ordered locus">CKR_0172</name>
</gene>
<comment type="function">
    <text evidence="1">Binds directly to 23S rRNA. The L1 stalk is quite mobile in the ribosome, and is involved in E site tRNA release.</text>
</comment>
<comment type="function">
    <text evidence="1">Protein L1 is also a translational repressor protein, it controls the translation of the L11 operon by binding to its mRNA.</text>
</comment>
<comment type="subunit">
    <text evidence="1">Part of the 50S ribosomal subunit.</text>
</comment>
<comment type="similarity">
    <text evidence="1">Belongs to the universal ribosomal protein uL1 family.</text>
</comment>
<protein>
    <recommendedName>
        <fullName evidence="1">Large ribosomal subunit protein uL1</fullName>
    </recommendedName>
    <alternativeName>
        <fullName evidence="2">50S ribosomal protein L1</fullName>
    </alternativeName>
</protein>
<feature type="chain" id="PRO_1000165673" description="Large ribosomal subunit protein uL1">
    <location>
        <begin position="1"/>
        <end position="231"/>
    </location>
</feature>
<accession>B9DY98</accession>
<reference key="1">
    <citation type="submission" date="2005-09" db="EMBL/GenBank/DDBJ databases">
        <title>Complete genome sequence of Clostridium kluyveri and comparative genomics of Clostridia species.</title>
        <authorList>
            <person name="Inui M."/>
            <person name="Nonaka H."/>
            <person name="Shinoda Y."/>
            <person name="Ikenaga Y."/>
            <person name="Abe M."/>
            <person name="Naito K."/>
            <person name="Vertes A.A."/>
            <person name="Yukawa H."/>
        </authorList>
    </citation>
    <scope>NUCLEOTIDE SEQUENCE [LARGE SCALE GENOMIC DNA]</scope>
    <source>
        <strain>NBRC 12016</strain>
    </source>
</reference>
<evidence type="ECO:0000255" key="1">
    <source>
        <dbReference type="HAMAP-Rule" id="MF_01318"/>
    </source>
</evidence>
<evidence type="ECO:0000305" key="2"/>
<sequence>MKLGKKYKESTKLIDRKTLYTPLEAMELALKTAKANFDETIELSIKLGVDPRHADQQVRGAVVLPHGTGKKVRVLVLAKGDRIKEAEDAGADYVGAEEYVEKIQKENWFDFDVVVATPDMMGVVGRLGRILGPKGLMPNPKSGTVTFDVAKAIQEIKAGKVEYRVDKTSIVHVPIGKKSFEVQKLLDNFRVLMEAIIKAKPSAAKGQYLKSVAVSSTMGPGIKINSVKVLE</sequence>